<evidence type="ECO:0000255" key="1">
    <source>
        <dbReference type="HAMAP-Rule" id="MF_00391"/>
    </source>
</evidence>
<evidence type="ECO:0000305" key="2"/>
<sequence length="45" mass="5253">MSKRTFQPSVLKRKRTHGFRARMATANGRKVLNARRAKGRKRLSK</sequence>
<organism>
    <name type="scientific">Vibrio cholerae serotype O1 (strain ATCC 39541 / Classical Ogawa 395 / O395)</name>
    <dbReference type="NCBI Taxonomy" id="345073"/>
    <lineage>
        <taxon>Bacteria</taxon>
        <taxon>Pseudomonadati</taxon>
        <taxon>Pseudomonadota</taxon>
        <taxon>Gammaproteobacteria</taxon>
        <taxon>Vibrionales</taxon>
        <taxon>Vibrionaceae</taxon>
        <taxon>Vibrio</taxon>
    </lineage>
</organism>
<protein>
    <recommendedName>
        <fullName evidence="1">Large ribosomal subunit protein bL34</fullName>
    </recommendedName>
    <alternativeName>
        <fullName evidence="2">50S ribosomal protein L34</fullName>
    </alternativeName>
</protein>
<comment type="similarity">
    <text evidence="1">Belongs to the bacterial ribosomal protein bL34 family.</text>
</comment>
<reference key="1">
    <citation type="submission" date="2007-03" db="EMBL/GenBank/DDBJ databases">
        <authorList>
            <person name="Heidelberg J."/>
        </authorList>
    </citation>
    <scope>NUCLEOTIDE SEQUENCE [LARGE SCALE GENOMIC DNA]</scope>
    <source>
        <strain>ATCC 39541 / Classical Ogawa 395 / O395</strain>
    </source>
</reference>
<reference key="2">
    <citation type="journal article" date="2008" name="PLoS ONE">
        <title>A recalibrated molecular clock and independent origins for the cholera pandemic clones.</title>
        <authorList>
            <person name="Feng L."/>
            <person name="Reeves P.R."/>
            <person name="Lan R."/>
            <person name="Ren Y."/>
            <person name="Gao C."/>
            <person name="Zhou Z."/>
            <person name="Ren Y."/>
            <person name="Cheng J."/>
            <person name="Wang W."/>
            <person name="Wang J."/>
            <person name="Qian W."/>
            <person name="Li D."/>
            <person name="Wang L."/>
        </authorList>
    </citation>
    <scope>NUCLEOTIDE SEQUENCE [LARGE SCALE GENOMIC DNA]</scope>
    <source>
        <strain>ATCC 39541 / Classical Ogawa 395 / O395</strain>
    </source>
</reference>
<name>RL34_VIBC3</name>
<proteinExistence type="inferred from homology"/>
<dbReference type="EMBL" id="CP000627">
    <property type="protein sequence ID" value="ABQ21960.1"/>
    <property type="molecule type" value="Genomic_DNA"/>
</dbReference>
<dbReference type="EMBL" id="CP001235">
    <property type="protein sequence ID" value="ACP08200.1"/>
    <property type="molecule type" value="Genomic_DNA"/>
</dbReference>
<dbReference type="RefSeq" id="WP_000044781.1">
    <property type="nucleotide sequence ID" value="NZ_JAACZH010000018.1"/>
</dbReference>
<dbReference type="SMR" id="A5F482"/>
<dbReference type="GeneID" id="94015086"/>
<dbReference type="KEGG" id="vco:VC0395_A2512"/>
<dbReference type="KEGG" id="vcr:VC395_0173"/>
<dbReference type="PATRIC" id="fig|345073.21.peg.164"/>
<dbReference type="eggNOG" id="COG0230">
    <property type="taxonomic scope" value="Bacteria"/>
</dbReference>
<dbReference type="HOGENOM" id="CLU_129938_2_0_6"/>
<dbReference type="OrthoDB" id="9804164at2"/>
<dbReference type="Proteomes" id="UP000000249">
    <property type="component" value="Chromosome 2"/>
</dbReference>
<dbReference type="GO" id="GO:1990904">
    <property type="term" value="C:ribonucleoprotein complex"/>
    <property type="evidence" value="ECO:0007669"/>
    <property type="project" value="UniProtKB-KW"/>
</dbReference>
<dbReference type="GO" id="GO:0005840">
    <property type="term" value="C:ribosome"/>
    <property type="evidence" value="ECO:0007669"/>
    <property type="project" value="UniProtKB-KW"/>
</dbReference>
<dbReference type="GO" id="GO:0003735">
    <property type="term" value="F:structural constituent of ribosome"/>
    <property type="evidence" value="ECO:0007669"/>
    <property type="project" value="InterPro"/>
</dbReference>
<dbReference type="GO" id="GO:0006412">
    <property type="term" value="P:translation"/>
    <property type="evidence" value="ECO:0007669"/>
    <property type="project" value="UniProtKB-UniRule"/>
</dbReference>
<dbReference type="FunFam" id="1.10.287.3980:FF:000001">
    <property type="entry name" value="Mitochondrial ribosomal protein L34"/>
    <property type="match status" value="1"/>
</dbReference>
<dbReference type="Gene3D" id="1.10.287.3980">
    <property type="match status" value="1"/>
</dbReference>
<dbReference type="HAMAP" id="MF_00391">
    <property type="entry name" value="Ribosomal_bL34"/>
    <property type="match status" value="1"/>
</dbReference>
<dbReference type="InterPro" id="IPR000271">
    <property type="entry name" value="Ribosomal_bL34"/>
</dbReference>
<dbReference type="InterPro" id="IPR020939">
    <property type="entry name" value="Ribosomal_bL34_CS"/>
</dbReference>
<dbReference type="NCBIfam" id="TIGR01030">
    <property type="entry name" value="rpmH_bact"/>
    <property type="match status" value="1"/>
</dbReference>
<dbReference type="PANTHER" id="PTHR14503:SF4">
    <property type="entry name" value="LARGE RIBOSOMAL SUBUNIT PROTEIN BL34M"/>
    <property type="match status" value="1"/>
</dbReference>
<dbReference type="PANTHER" id="PTHR14503">
    <property type="entry name" value="MITOCHONDRIAL RIBOSOMAL PROTEIN 34 FAMILY MEMBER"/>
    <property type="match status" value="1"/>
</dbReference>
<dbReference type="Pfam" id="PF00468">
    <property type="entry name" value="Ribosomal_L34"/>
    <property type="match status" value="1"/>
</dbReference>
<dbReference type="PROSITE" id="PS00784">
    <property type="entry name" value="RIBOSOMAL_L34"/>
    <property type="match status" value="1"/>
</dbReference>
<feature type="chain" id="PRO_1000072222" description="Large ribosomal subunit protein bL34">
    <location>
        <begin position="1"/>
        <end position="45"/>
    </location>
</feature>
<keyword id="KW-0687">Ribonucleoprotein</keyword>
<keyword id="KW-0689">Ribosomal protein</keyword>
<accession>A5F482</accession>
<accession>C3M321</accession>
<gene>
    <name evidence="1" type="primary">rpmH</name>
    <name type="ordered locus">VC0395_A2512</name>
    <name type="ordered locus">VC395_0173</name>
</gene>